<evidence type="ECO:0000255" key="1">
    <source>
        <dbReference type="HAMAP-Rule" id="MF_01177"/>
    </source>
</evidence>
<sequence>MQLTSFTDYGLRALIYMASLPEGRMTSISEVTDVYGVSRNHMVKIINQLSRAGYVTAVRGKNGGIRLGKPASAIRIGDVVRELEPLSLVNCSSEFCHITPACRLKQALSKAVQSFLTELDNYTLADLVEENQPLYKLLLVE</sequence>
<dbReference type="EMBL" id="CP000948">
    <property type="protein sequence ID" value="ACB05166.1"/>
    <property type="molecule type" value="Genomic_DNA"/>
</dbReference>
<dbReference type="RefSeq" id="WP_001177639.1">
    <property type="nucleotide sequence ID" value="NC_010473.1"/>
</dbReference>
<dbReference type="SMR" id="B1XDS9"/>
<dbReference type="GeneID" id="93777643"/>
<dbReference type="KEGG" id="ecd:ECDH10B_4373"/>
<dbReference type="HOGENOM" id="CLU_107144_2_1_6"/>
<dbReference type="GO" id="GO:0005829">
    <property type="term" value="C:cytosol"/>
    <property type="evidence" value="ECO:0007669"/>
    <property type="project" value="TreeGrafter"/>
</dbReference>
<dbReference type="GO" id="GO:0051537">
    <property type="term" value="F:2 iron, 2 sulfur cluster binding"/>
    <property type="evidence" value="ECO:0007669"/>
    <property type="project" value="UniProtKB-KW"/>
</dbReference>
<dbReference type="GO" id="GO:0003700">
    <property type="term" value="F:DNA-binding transcription factor activity"/>
    <property type="evidence" value="ECO:0007669"/>
    <property type="project" value="UniProtKB-UniRule"/>
</dbReference>
<dbReference type="GO" id="GO:0003690">
    <property type="term" value="F:double-stranded DNA binding"/>
    <property type="evidence" value="ECO:0007669"/>
    <property type="project" value="UniProtKB-UniRule"/>
</dbReference>
<dbReference type="GO" id="GO:0005506">
    <property type="term" value="F:iron ion binding"/>
    <property type="evidence" value="ECO:0007669"/>
    <property type="project" value="UniProtKB-UniRule"/>
</dbReference>
<dbReference type="GO" id="GO:0045892">
    <property type="term" value="P:negative regulation of DNA-templated transcription"/>
    <property type="evidence" value="ECO:0007669"/>
    <property type="project" value="InterPro"/>
</dbReference>
<dbReference type="FunFam" id="1.10.10.10:FF:000105">
    <property type="entry name" value="HTH-type transcriptional repressor NsrR"/>
    <property type="match status" value="1"/>
</dbReference>
<dbReference type="Gene3D" id="1.10.10.10">
    <property type="entry name" value="Winged helix-like DNA-binding domain superfamily/Winged helix DNA-binding domain"/>
    <property type="match status" value="1"/>
</dbReference>
<dbReference type="HAMAP" id="MF_01177">
    <property type="entry name" value="HTH_type_NsrR"/>
    <property type="match status" value="1"/>
</dbReference>
<dbReference type="InterPro" id="IPR030489">
    <property type="entry name" value="TR_Rrf2-type_CS"/>
</dbReference>
<dbReference type="InterPro" id="IPR000944">
    <property type="entry name" value="Tscrpt_reg_Rrf2"/>
</dbReference>
<dbReference type="InterPro" id="IPR023761">
    <property type="entry name" value="Tscrpt_rep_HTH_NsrR"/>
</dbReference>
<dbReference type="InterPro" id="IPR036388">
    <property type="entry name" value="WH-like_DNA-bd_sf"/>
</dbReference>
<dbReference type="InterPro" id="IPR036390">
    <property type="entry name" value="WH_DNA-bd_sf"/>
</dbReference>
<dbReference type="NCBIfam" id="NF008240">
    <property type="entry name" value="PRK11014.1"/>
    <property type="match status" value="1"/>
</dbReference>
<dbReference type="NCBIfam" id="TIGR00738">
    <property type="entry name" value="rrf2_super"/>
    <property type="match status" value="1"/>
</dbReference>
<dbReference type="PANTHER" id="PTHR33221:SF4">
    <property type="entry name" value="HTH-TYPE TRANSCRIPTIONAL REPRESSOR NSRR"/>
    <property type="match status" value="1"/>
</dbReference>
<dbReference type="PANTHER" id="PTHR33221">
    <property type="entry name" value="WINGED HELIX-TURN-HELIX TRANSCRIPTIONAL REGULATOR, RRF2 FAMILY"/>
    <property type="match status" value="1"/>
</dbReference>
<dbReference type="Pfam" id="PF02082">
    <property type="entry name" value="Rrf2"/>
    <property type="match status" value="1"/>
</dbReference>
<dbReference type="SUPFAM" id="SSF46785">
    <property type="entry name" value="Winged helix' DNA-binding domain"/>
    <property type="match status" value="1"/>
</dbReference>
<dbReference type="PROSITE" id="PS01332">
    <property type="entry name" value="HTH_RRF2_1"/>
    <property type="match status" value="1"/>
</dbReference>
<dbReference type="PROSITE" id="PS51197">
    <property type="entry name" value="HTH_RRF2_2"/>
    <property type="match status" value="1"/>
</dbReference>
<protein>
    <recommendedName>
        <fullName evidence="1">HTH-type transcriptional repressor NsrR</fullName>
    </recommendedName>
</protein>
<proteinExistence type="inferred from homology"/>
<feature type="chain" id="PRO_1000138119" description="HTH-type transcriptional repressor NsrR">
    <location>
        <begin position="1"/>
        <end position="141"/>
    </location>
</feature>
<feature type="domain" description="HTH rrf2-type" evidence="1">
    <location>
        <begin position="2"/>
        <end position="129"/>
    </location>
</feature>
<feature type="DNA-binding region" description="H-T-H motif" evidence="1">
    <location>
        <begin position="28"/>
        <end position="51"/>
    </location>
</feature>
<feature type="binding site" evidence="1">
    <location>
        <position position="91"/>
    </location>
    <ligand>
        <name>[2Fe-2S] cluster</name>
        <dbReference type="ChEBI" id="CHEBI:190135"/>
    </ligand>
</feature>
<feature type="binding site" evidence="1">
    <location>
        <position position="96"/>
    </location>
    <ligand>
        <name>[2Fe-2S] cluster</name>
        <dbReference type="ChEBI" id="CHEBI:190135"/>
    </ligand>
</feature>
<feature type="binding site" evidence="1">
    <location>
        <position position="102"/>
    </location>
    <ligand>
        <name>[2Fe-2S] cluster</name>
        <dbReference type="ChEBI" id="CHEBI:190135"/>
    </ligand>
</feature>
<keyword id="KW-0001">2Fe-2S</keyword>
<keyword id="KW-0238">DNA-binding</keyword>
<keyword id="KW-0408">Iron</keyword>
<keyword id="KW-0411">Iron-sulfur</keyword>
<keyword id="KW-0479">Metal-binding</keyword>
<keyword id="KW-0678">Repressor</keyword>
<keyword id="KW-0804">Transcription</keyword>
<keyword id="KW-0805">Transcription regulation</keyword>
<gene>
    <name evidence="1" type="primary">nsrR</name>
    <name type="ordered locus">ECDH10B_4373</name>
</gene>
<name>NSRR_ECODH</name>
<accession>B1XDS9</accession>
<reference key="1">
    <citation type="journal article" date="2008" name="J. Bacteriol.">
        <title>The complete genome sequence of Escherichia coli DH10B: insights into the biology of a laboratory workhorse.</title>
        <authorList>
            <person name="Durfee T."/>
            <person name="Nelson R."/>
            <person name="Baldwin S."/>
            <person name="Plunkett G. III"/>
            <person name="Burland V."/>
            <person name="Mau B."/>
            <person name="Petrosino J.F."/>
            <person name="Qin X."/>
            <person name="Muzny D.M."/>
            <person name="Ayele M."/>
            <person name="Gibbs R.A."/>
            <person name="Csorgo B."/>
            <person name="Posfai G."/>
            <person name="Weinstock G.M."/>
            <person name="Blattner F.R."/>
        </authorList>
    </citation>
    <scope>NUCLEOTIDE SEQUENCE [LARGE SCALE GENOMIC DNA]</scope>
    <source>
        <strain>K12 / DH10B</strain>
    </source>
</reference>
<comment type="function">
    <text evidence="1">Nitric oxide-sensitive repressor of genes involved in protecting the cell against nitrosative stress. May require iron for activity.</text>
</comment>
<comment type="cofactor">
    <cofactor evidence="1">
        <name>[2Fe-2S] cluster</name>
        <dbReference type="ChEBI" id="CHEBI:190135"/>
    </cofactor>
    <text evidence="1">Binds 1 [2Fe-2S] cluster per subunit.</text>
</comment>
<organism>
    <name type="scientific">Escherichia coli (strain K12 / DH10B)</name>
    <dbReference type="NCBI Taxonomy" id="316385"/>
    <lineage>
        <taxon>Bacteria</taxon>
        <taxon>Pseudomonadati</taxon>
        <taxon>Pseudomonadota</taxon>
        <taxon>Gammaproteobacteria</taxon>
        <taxon>Enterobacterales</taxon>
        <taxon>Enterobacteriaceae</taxon>
        <taxon>Escherichia</taxon>
    </lineage>
</organism>